<sequence>MTLPAFITWDFDPVLFTLFGHPIVWYGLLFALGLIILGPWIEKKMWEHEKLDSKWFESLAVYVFVGTIVGARLGHVLFYDPAYYLANPAKIFVTWEGGLASHGGTIGIIIACWLYSRRVTRKSILWVLDRLAVPTGIVAAMIRLGNLTNSEIFGRPTTLPWGFRFIRSEEYRHLVPNMDMGCHPTQIYEALCYLAVFALCMWLYWKRDAARRYSGLIVGVFLTGIFLSRFIIERIKIVQEPWELKLIESVGLNMGQLLSIPFVLAGIWLIIRAVKNPITQKLS</sequence>
<comment type="function">
    <text evidence="1">Catalyzes the transfer of the diacylglyceryl group from phosphatidylglycerol to the sulfhydryl group of the N-terminal cysteine of a prolipoprotein, the first step in the formation of mature lipoproteins.</text>
</comment>
<comment type="catalytic activity">
    <reaction evidence="1">
        <text>L-cysteinyl-[prolipoprotein] + a 1,2-diacyl-sn-glycero-3-phospho-(1'-sn-glycerol) = an S-1,2-diacyl-sn-glyceryl-L-cysteinyl-[prolipoprotein] + sn-glycerol 1-phosphate + H(+)</text>
        <dbReference type="Rhea" id="RHEA:56712"/>
        <dbReference type="Rhea" id="RHEA-COMP:14679"/>
        <dbReference type="Rhea" id="RHEA-COMP:14680"/>
        <dbReference type="ChEBI" id="CHEBI:15378"/>
        <dbReference type="ChEBI" id="CHEBI:29950"/>
        <dbReference type="ChEBI" id="CHEBI:57685"/>
        <dbReference type="ChEBI" id="CHEBI:64716"/>
        <dbReference type="ChEBI" id="CHEBI:140658"/>
        <dbReference type="EC" id="2.5.1.145"/>
    </reaction>
</comment>
<comment type="pathway">
    <text evidence="1">Protein modification; lipoprotein biosynthesis (diacylglyceryl transfer).</text>
</comment>
<comment type="subcellular location">
    <subcellularLocation>
        <location evidence="1">Cell inner membrane</location>
        <topology evidence="1">Multi-pass membrane protein</topology>
    </subcellularLocation>
</comment>
<comment type="similarity">
    <text evidence="1">Belongs to the Lgt family.</text>
</comment>
<evidence type="ECO:0000255" key="1">
    <source>
        <dbReference type="HAMAP-Rule" id="MF_01147"/>
    </source>
</evidence>
<keyword id="KW-0997">Cell inner membrane</keyword>
<keyword id="KW-1003">Cell membrane</keyword>
<keyword id="KW-0472">Membrane</keyword>
<keyword id="KW-0808">Transferase</keyword>
<keyword id="KW-0812">Transmembrane</keyword>
<keyword id="KW-1133">Transmembrane helix</keyword>
<accession>B2RJ03</accession>
<dbReference type="EC" id="2.5.1.145" evidence="1"/>
<dbReference type="EMBL" id="AP009380">
    <property type="protein sequence ID" value="BAG33348.1"/>
    <property type="molecule type" value="Genomic_DNA"/>
</dbReference>
<dbReference type="RefSeq" id="WP_004585342.1">
    <property type="nucleotide sequence ID" value="NZ_CP025930.1"/>
</dbReference>
<dbReference type="SMR" id="B2RJ03"/>
<dbReference type="GeneID" id="29256046"/>
<dbReference type="KEGG" id="pgn:PGN_0829"/>
<dbReference type="eggNOG" id="COG0682">
    <property type="taxonomic scope" value="Bacteria"/>
</dbReference>
<dbReference type="HOGENOM" id="CLU_013386_1_0_10"/>
<dbReference type="OrthoDB" id="871140at2"/>
<dbReference type="BioCyc" id="PGIN431947:G1G2V-908-MONOMER"/>
<dbReference type="UniPathway" id="UPA00664"/>
<dbReference type="Proteomes" id="UP000008842">
    <property type="component" value="Chromosome"/>
</dbReference>
<dbReference type="GO" id="GO:0005886">
    <property type="term" value="C:plasma membrane"/>
    <property type="evidence" value="ECO:0007669"/>
    <property type="project" value="UniProtKB-SubCell"/>
</dbReference>
<dbReference type="GO" id="GO:0008961">
    <property type="term" value="F:phosphatidylglycerol-prolipoprotein diacylglyceryl transferase activity"/>
    <property type="evidence" value="ECO:0007669"/>
    <property type="project" value="UniProtKB-UniRule"/>
</dbReference>
<dbReference type="GO" id="GO:0042158">
    <property type="term" value="P:lipoprotein biosynthetic process"/>
    <property type="evidence" value="ECO:0007669"/>
    <property type="project" value="UniProtKB-UniRule"/>
</dbReference>
<dbReference type="HAMAP" id="MF_01147">
    <property type="entry name" value="Lgt"/>
    <property type="match status" value="1"/>
</dbReference>
<dbReference type="InterPro" id="IPR001640">
    <property type="entry name" value="Lgt"/>
</dbReference>
<dbReference type="NCBIfam" id="TIGR00544">
    <property type="entry name" value="lgt"/>
    <property type="match status" value="1"/>
</dbReference>
<dbReference type="PANTHER" id="PTHR30589:SF0">
    <property type="entry name" value="PHOSPHATIDYLGLYCEROL--PROLIPOPROTEIN DIACYLGLYCERYL TRANSFERASE"/>
    <property type="match status" value="1"/>
</dbReference>
<dbReference type="PANTHER" id="PTHR30589">
    <property type="entry name" value="PROLIPOPROTEIN DIACYLGLYCERYL TRANSFERASE"/>
    <property type="match status" value="1"/>
</dbReference>
<dbReference type="Pfam" id="PF01790">
    <property type="entry name" value="LGT"/>
    <property type="match status" value="1"/>
</dbReference>
<gene>
    <name evidence="1" type="primary">lgt</name>
    <name type="ordered locus">PGN_0829</name>
</gene>
<feature type="chain" id="PRO_1000137442" description="Phosphatidylglycerol--prolipoprotein diacylglyceryl transferase">
    <location>
        <begin position="1"/>
        <end position="283"/>
    </location>
</feature>
<feature type="transmembrane region" description="Helical" evidence="1">
    <location>
        <begin position="18"/>
        <end position="38"/>
    </location>
</feature>
<feature type="transmembrane region" description="Helical" evidence="1">
    <location>
        <begin position="59"/>
        <end position="79"/>
    </location>
</feature>
<feature type="transmembrane region" description="Helical" evidence="1">
    <location>
        <begin position="91"/>
        <end position="111"/>
    </location>
</feature>
<feature type="transmembrane region" description="Helical" evidence="1">
    <location>
        <begin position="124"/>
        <end position="144"/>
    </location>
</feature>
<feature type="transmembrane region" description="Helical" evidence="1">
    <location>
        <begin position="185"/>
        <end position="205"/>
    </location>
</feature>
<feature type="transmembrane region" description="Helical" evidence="1">
    <location>
        <begin position="213"/>
        <end position="233"/>
    </location>
</feature>
<feature type="transmembrane region" description="Helical" evidence="1">
    <location>
        <begin position="251"/>
        <end position="271"/>
    </location>
</feature>
<feature type="binding site" evidence="1">
    <location>
        <position position="143"/>
    </location>
    <ligand>
        <name>a 1,2-diacyl-sn-glycero-3-phospho-(1'-sn-glycerol)</name>
        <dbReference type="ChEBI" id="CHEBI:64716"/>
    </ligand>
</feature>
<reference key="1">
    <citation type="journal article" date="2008" name="DNA Res.">
        <title>Determination of the genome sequence of Porphyromonas gingivalis strain ATCC 33277 and genomic comparison with strain W83 revealed extensive genome rearrangements in P. gingivalis.</title>
        <authorList>
            <person name="Naito M."/>
            <person name="Hirakawa H."/>
            <person name="Yamashita A."/>
            <person name="Ohara N."/>
            <person name="Shoji M."/>
            <person name="Yukitake H."/>
            <person name="Nakayama K."/>
            <person name="Toh H."/>
            <person name="Yoshimura F."/>
            <person name="Kuhara S."/>
            <person name="Hattori M."/>
            <person name="Hayashi T."/>
            <person name="Nakayama K."/>
        </authorList>
    </citation>
    <scope>NUCLEOTIDE SEQUENCE [LARGE SCALE GENOMIC DNA]</scope>
    <source>
        <strain>ATCC 33277 / DSM 20709 / CIP 103683 / JCM 12257 / NCTC 11834 / 2561</strain>
    </source>
</reference>
<protein>
    <recommendedName>
        <fullName evidence="1">Phosphatidylglycerol--prolipoprotein diacylglyceryl transferase</fullName>
        <ecNumber evidence="1">2.5.1.145</ecNumber>
    </recommendedName>
</protein>
<organism>
    <name type="scientific">Porphyromonas gingivalis (strain ATCC 33277 / DSM 20709 / CIP 103683 / JCM 12257 / NCTC 11834 / 2561)</name>
    <dbReference type="NCBI Taxonomy" id="431947"/>
    <lineage>
        <taxon>Bacteria</taxon>
        <taxon>Pseudomonadati</taxon>
        <taxon>Bacteroidota</taxon>
        <taxon>Bacteroidia</taxon>
        <taxon>Bacteroidales</taxon>
        <taxon>Porphyromonadaceae</taxon>
        <taxon>Porphyromonas</taxon>
    </lineage>
</organism>
<name>LGT_PORG3</name>
<proteinExistence type="inferred from homology"/>